<organism>
    <name type="scientific">Escherichia coli O8 (strain IAI1)</name>
    <dbReference type="NCBI Taxonomy" id="585034"/>
    <lineage>
        <taxon>Bacteria</taxon>
        <taxon>Pseudomonadati</taxon>
        <taxon>Pseudomonadota</taxon>
        <taxon>Gammaproteobacteria</taxon>
        <taxon>Enterobacterales</taxon>
        <taxon>Enterobacteriaceae</taxon>
        <taxon>Escherichia</taxon>
    </lineage>
</organism>
<dbReference type="EC" id="3.1.21.2" evidence="1"/>
<dbReference type="EMBL" id="CU928160">
    <property type="protein sequence ID" value="CAQ99084.1"/>
    <property type="molecule type" value="Genomic_DNA"/>
</dbReference>
<dbReference type="RefSeq" id="WP_000873890.1">
    <property type="nucleotide sequence ID" value="NC_011741.1"/>
</dbReference>
<dbReference type="SMR" id="B7M507"/>
<dbReference type="GeneID" id="93775023"/>
<dbReference type="KEGG" id="ecr:ECIAI1_2239"/>
<dbReference type="HOGENOM" id="CLU_025885_0_4_6"/>
<dbReference type="GO" id="GO:0008833">
    <property type="term" value="F:deoxyribonuclease IV (phage-T4-induced) activity"/>
    <property type="evidence" value="ECO:0007669"/>
    <property type="project" value="UniProtKB-UniRule"/>
</dbReference>
<dbReference type="GO" id="GO:0003677">
    <property type="term" value="F:DNA binding"/>
    <property type="evidence" value="ECO:0007669"/>
    <property type="project" value="InterPro"/>
</dbReference>
<dbReference type="GO" id="GO:0003906">
    <property type="term" value="F:DNA-(apurinic or apyrimidinic site) endonuclease activity"/>
    <property type="evidence" value="ECO:0007669"/>
    <property type="project" value="TreeGrafter"/>
</dbReference>
<dbReference type="GO" id="GO:0008081">
    <property type="term" value="F:phosphoric diester hydrolase activity"/>
    <property type="evidence" value="ECO:0007669"/>
    <property type="project" value="TreeGrafter"/>
</dbReference>
<dbReference type="GO" id="GO:0008270">
    <property type="term" value="F:zinc ion binding"/>
    <property type="evidence" value="ECO:0007669"/>
    <property type="project" value="UniProtKB-UniRule"/>
</dbReference>
<dbReference type="GO" id="GO:0006284">
    <property type="term" value="P:base-excision repair"/>
    <property type="evidence" value="ECO:0007669"/>
    <property type="project" value="TreeGrafter"/>
</dbReference>
<dbReference type="CDD" id="cd00019">
    <property type="entry name" value="AP2Ec"/>
    <property type="match status" value="1"/>
</dbReference>
<dbReference type="FunFam" id="3.20.20.150:FF:000001">
    <property type="entry name" value="Probable endonuclease 4"/>
    <property type="match status" value="1"/>
</dbReference>
<dbReference type="Gene3D" id="3.20.20.150">
    <property type="entry name" value="Divalent-metal-dependent TIM barrel enzymes"/>
    <property type="match status" value="1"/>
</dbReference>
<dbReference type="HAMAP" id="MF_00152">
    <property type="entry name" value="Nfo"/>
    <property type="match status" value="1"/>
</dbReference>
<dbReference type="InterPro" id="IPR001719">
    <property type="entry name" value="AP_endonuc_2"/>
</dbReference>
<dbReference type="InterPro" id="IPR018246">
    <property type="entry name" value="AP_endonuc_F2_Zn_BS"/>
</dbReference>
<dbReference type="InterPro" id="IPR036237">
    <property type="entry name" value="Xyl_isomerase-like_sf"/>
</dbReference>
<dbReference type="InterPro" id="IPR013022">
    <property type="entry name" value="Xyl_isomerase-like_TIM-brl"/>
</dbReference>
<dbReference type="NCBIfam" id="TIGR00587">
    <property type="entry name" value="nfo"/>
    <property type="match status" value="1"/>
</dbReference>
<dbReference type="NCBIfam" id="NF002199">
    <property type="entry name" value="PRK01060.1-4"/>
    <property type="match status" value="1"/>
</dbReference>
<dbReference type="PANTHER" id="PTHR21445:SF0">
    <property type="entry name" value="APURINIC-APYRIMIDINIC ENDONUCLEASE"/>
    <property type="match status" value="1"/>
</dbReference>
<dbReference type="PANTHER" id="PTHR21445">
    <property type="entry name" value="ENDONUCLEASE IV ENDODEOXYRIBONUCLEASE IV"/>
    <property type="match status" value="1"/>
</dbReference>
<dbReference type="Pfam" id="PF01261">
    <property type="entry name" value="AP_endonuc_2"/>
    <property type="match status" value="1"/>
</dbReference>
<dbReference type="SMART" id="SM00518">
    <property type="entry name" value="AP2Ec"/>
    <property type="match status" value="1"/>
</dbReference>
<dbReference type="SUPFAM" id="SSF51658">
    <property type="entry name" value="Xylose isomerase-like"/>
    <property type="match status" value="1"/>
</dbReference>
<dbReference type="PROSITE" id="PS00729">
    <property type="entry name" value="AP_NUCLEASE_F2_1"/>
    <property type="match status" value="1"/>
</dbReference>
<dbReference type="PROSITE" id="PS00730">
    <property type="entry name" value="AP_NUCLEASE_F2_2"/>
    <property type="match status" value="1"/>
</dbReference>
<dbReference type="PROSITE" id="PS00731">
    <property type="entry name" value="AP_NUCLEASE_F2_3"/>
    <property type="match status" value="1"/>
</dbReference>
<dbReference type="PROSITE" id="PS51432">
    <property type="entry name" value="AP_NUCLEASE_F2_4"/>
    <property type="match status" value="1"/>
</dbReference>
<sequence>MKYIGAHVSAAGGLANAAIRAAEIDATAFALFTKNQRQWRAAPLTTQTIDEFKAACEKYHYTSAQILPHDSYLINLGHPVTEALEKSRDAFIDEMQRCEQLGLSLLNFHPGSHLMQISEEDCLARIAESINIALDKTQGVTAVIENTAGQGSNLGFKFEHLAAIIDGVEDKSRVGVCIDTCHAFAAGYDLRTPAECEKTFADFARIVGFKYLRGMHLNDAKSTFGSRVDRHHSLGEGNIGHDAFRWIMQDDRFDGIPLILETINPDIWAEEIAWLKAQQTEKAVA</sequence>
<keyword id="KW-0227">DNA damage</keyword>
<keyword id="KW-0234">DNA repair</keyword>
<keyword id="KW-0255">Endonuclease</keyword>
<keyword id="KW-0378">Hydrolase</keyword>
<keyword id="KW-0479">Metal-binding</keyword>
<keyword id="KW-0540">Nuclease</keyword>
<keyword id="KW-0862">Zinc</keyword>
<feature type="chain" id="PRO_1000118095" description="Probable endonuclease 4">
    <location>
        <begin position="1"/>
        <end position="285"/>
    </location>
</feature>
<feature type="binding site" evidence="1">
    <location>
        <position position="69"/>
    </location>
    <ligand>
        <name>Zn(2+)</name>
        <dbReference type="ChEBI" id="CHEBI:29105"/>
        <label>1</label>
    </ligand>
</feature>
<feature type="binding site" evidence="1">
    <location>
        <position position="109"/>
    </location>
    <ligand>
        <name>Zn(2+)</name>
        <dbReference type="ChEBI" id="CHEBI:29105"/>
        <label>1</label>
    </ligand>
</feature>
<feature type="binding site" evidence="1">
    <location>
        <position position="145"/>
    </location>
    <ligand>
        <name>Zn(2+)</name>
        <dbReference type="ChEBI" id="CHEBI:29105"/>
        <label>1</label>
    </ligand>
</feature>
<feature type="binding site" evidence="1">
    <location>
        <position position="145"/>
    </location>
    <ligand>
        <name>Zn(2+)</name>
        <dbReference type="ChEBI" id="CHEBI:29105"/>
        <label>2</label>
    </ligand>
</feature>
<feature type="binding site" evidence="1">
    <location>
        <position position="179"/>
    </location>
    <ligand>
        <name>Zn(2+)</name>
        <dbReference type="ChEBI" id="CHEBI:29105"/>
        <label>2</label>
    </ligand>
</feature>
<feature type="binding site" evidence="1">
    <location>
        <position position="182"/>
    </location>
    <ligand>
        <name>Zn(2+)</name>
        <dbReference type="ChEBI" id="CHEBI:29105"/>
        <label>3</label>
    </ligand>
</feature>
<feature type="binding site" evidence="1">
    <location>
        <position position="216"/>
    </location>
    <ligand>
        <name>Zn(2+)</name>
        <dbReference type="ChEBI" id="CHEBI:29105"/>
        <label>2</label>
    </ligand>
</feature>
<feature type="binding site" evidence="1">
    <location>
        <position position="229"/>
    </location>
    <ligand>
        <name>Zn(2+)</name>
        <dbReference type="ChEBI" id="CHEBI:29105"/>
        <label>3</label>
    </ligand>
</feature>
<feature type="binding site" evidence="1">
    <location>
        <position position="231"/>
    </location>
    <ligand>
        <name>Zn(2+)</name>
        <dbReference type="ChEBI" id="CHEBI:29105"/>
        <label>3</label>
    </ligand>
</feature>
<feature type="binding site" evidence="1">
    <location>
        <position position="261"/>
    </location>
    <ligand>
        <name>Zn(2+)</name>
        <dbReference type="ChEBI" id="CHEBI:29105"/>
        <label>2</label>
    </ligand>
</feature>
<name>END4_ECO8A</name>
<protein>
    <recommendedName>
        <fullName evidence="1">Probable endonuclease 4</fullName>
        <ecNumber evidence="1">3.1.21.2</ecNumber>
    </recommendedName>
    <alternativeName>
        <fullName evidence="1">Endodeoxyribonuclease IV</fullName>
    </alternativeName>
    <alternativeName>
        <fullName evidence="1">Endonuclease IV</fullName>
    </alternativeName>
</protein>
<comment type="function">
    <text evidence="1">Endonuclease IV plays a role in DNA repair. It cleaves phosphodiester bonds at apurinic or apyrimidinic (AP) sites, generating a 3'-hydroxyl group and a 5'-terminal sugar phosphate.</text>
</comment>
<comment type="catalytic activity">
    <reaction evidence="1">
        <text>Endonucleolytic cleavage to 5'-phosphooligonucleotide end-products.</text>
        <dbReference type="EC" id="3.1.21.2"/>
    </reaction>
</comment>
<comment type="cofactor">
    <cofactor evidence="1">
        <name>Zn(2+)</name>
        <dbReference type="ChEBI" id="CHEBI:29105"/>
    </cofactor>
    <text evidence="1">Binds 3 Zn(2+) ions.</text>
</comment>
<comment type="similarity">
    <text evidence="1">Belongs to the AP endonuclease 2 family.</text>
</comment>
<reference key="1">
    <citation type="journal article" date="2009" name="PLoS Genet.">
        <title>Organised genome dynamics in the Escherichia coli species results in highly diverse adaptive paths.</title>
        <authorList>
            <person name="Touchon M."/>
            <person name="Hoede C."/>
            <person name="Tenaillon O."/>
            <person name="Barbe V."/>
            <person name="Baeriswyl S."/>
            <person name="Bidet P."/>
            <person name="Bingen E."/>
            <person name="Bonacorsi S."/>
            <person name="Bouchier C."/>
            <person name="Bouvet O."/>
            <person name="Calteau A."/>
            <person name="Chiapello H."/>
            <person name="Clermont O."/>
            <person name="Cruveiller S."/>
            <person name="Danchin A."/>
            <person name="Diard M."/>
            <person name="Dossat C."/>
            <person name="Karoui M.E."/>
            <person name="Frapy E."/>
            <person name="Garry L."/>
            <person name="Ghigo J.M."/>
            <person name="Gilles A.M."/>
            <person name="Johnson J."/>
            <person name="Le Bouguenec C."/>
            <person name="Lescat M."/>
            <person name="Mangenot S."/>
            <person name="Martinez-Jehanne V."/>
            <person name="Matic I."/>
            <person name="Nassif X."/>
            <person name="Oztas S."/>
            <person name="Petit M.A."/>
            <person name="Pichon C."/>
            <person name="Rouy Z."/>
            <person name="Ruf C.S."/>
            <person name="Schneider D."/>
            <person name="Tourret J."/>
            <person name="Vacherie B."/>
            <person name="Vallenet D."/>
            <person name="Medigue C."/>
            <person name="Rocha E.P.C."/>
            <person name="Denamur E."/>
        </authorList>
    </citation>
    <scope>NUCLEOTIDE SEQUENCE [LARGE SCALE GENOMIC DNA]</scope>
    <source>
        <strain>IAI1</strain>
    </source>
</reference>
<evidence type="ECO:0000255" key="1">
    <source>
        <dbReference type="HAMAP-Rule" id="MF_00152"/>
    </source>
</evidence>
<accession>B7M507</accession>
<gene>
    <name evidence="1" type="primary">nfo</name>
    <name type="ordered locus">ECIAI1_2239</name>
</gene>
<proteinExistence type="inferred from homology"/>